<keyword id="KW-0002">3D-structure</keyword>
<keyword id="KW-0072">Autophagy</keyword>
<keyword id="KW-0256">Endoplasmic reticulum</keyword>
<keyword id="KW-0931">ER-Golgi transport</keyword>
<keyword id="KW-0333">Golgi apparatus</keyword>
<keyword id="KW-0449">Lipoprotein</keyword>
<keyword id="KW-0564">Palmitate</keyword>
<keyword id="KW-1185">Reference proteome</keyword>
<keyword id="KW-0813">Transport</keyword>
<sequence>MVSTTQSRSLKAMGEEIWKNKTEKINTELFTLTYGSIVAQLCQDYERDFNKVNDHLYSMGYNIGCRLIEDFLARTALPRCENLVKTSEVLSKCAFKIFLNITPNITNWSHNKDTFSLILDENPLADFVELPMDAMKSLWYSNILCGVLKGSLEMVQLDCDVWFVSDILRGDSQTEIKVKLNRILKDEIPIGED</sequence>
<dbReference type="EMBL" id="Z28293">
    <property type="protein sequence ID" value="CAA82147.1"/>
    <property type="molecule type" value="Genomic_DNA"/>
</dbReference>
<dbReference type="EMBL" id="AY557896">
    <property type="protein sequence ID" value="AAS56222.1"/>
    <property type="molecule type" value="Genomic_DNA"/>
</dbReference>
<dbReference type="EMBL" id="BK006944">
    <property type="protein sequence ID" value="DAA09219.1"/>
    <property type="molecule type" value="Genomic_DNA"/>
</dbReference>
<dbReference type="PIR" id="S38144">
    <property type="entry name" value="S38144"/>
</dbReference>
<dbReference type="RefSeq" id="NP_012994.1">
    <property type="nucleotide sequence ID" value="NM_001179858.1"/>
</dbReference>
<dbReference type="PDB" id="3CUE">
    <property type="method" value="X-ray"/>
    <property type="resolution" value="3.70 A"/>
    <property type="chains" value="D/E/J/K/P/Q/V/W=1-193"/>
</dbReference>
<dbReference type="PDB" id="7E2C">
    <property type="method" value="EM"/>
    <property type="resolution" value="4.18 A"/>
    <property type="chains" value="C/F=1-193"/>
</dbReference>
<dbReference type="PDB" id="7E2D">
    <property type="method" value="EM"/>
    <property type="resolution" value="3.71 A"/>
    <property type="chains" value="C/F=1-191"/>
</dbReference>
<dbReference type="PDB" id="7E8S">
    <property type="method" value="EM"/>
    <property type="resolution" value="4.36 A"/>
    <property type="chains" value="C/F/N/Q=1-193"/>
</dbReference>
<dbReference type="PDB" id="7E8T">
    <property type="method" value="EM"/>
    <property type="resolution" value="3.80 A"/>
    <property type="chains" value="C/F=1-193"/>
</dbReference>
<dbReference type="PDB" id="7E93">
    <property type="method" value="EM"/>
    <property type="resolution" value="6.54 A"/>
    <property type="chains" value="C/F/N/Q=1-193"/>
</dbReference>
<dbReference type="PDB" id="7E94">
    <property type="method" value="EM"/>
    <property type="resolution" value="4.67 A"/>
    <property type="chains" value="C/F/N/Q=1-193"/>
</dbReference>
<dbReference type="PDB" id="7EA3">
    <property type="method" value="EM"/>
    <property type="resolution" value="4.31 A"/>
    <property type="chains" value="C/F/P/S=1-193"/>
</dbReference>
<dbReference type="PDB" id="7KMT">
    <property type="method" value="EM"/>
    <property type="resolution" value="3.70 A"/>
    <property type="chains" value="F/I=1-193"/>
</dbReference>
<dbReference type="PDB" id="7U05">
    <property type="method" value="EM"/>
    <property type="resolution" value="3.70 A"/>
    <property type="chains" value="F/I/f/i=1-193"/>
</dbReference>
<dbReference type="PDB" id="7U06">
    <property type="method" value="EM"/>
    <property type="resolution" value="4.20 A"/>
    <property type="chains" value="F/I/f/i=1-193"/>
</dbReference>
<dbReference type="PDBsum" id="3CUE"/>
<dbReference type="PDBsum" id="7E2C"/>
<dbReference type="PDBsum" id="7E2D"/>
<dbReference type="PDBsum" id="7E8S"/>
<dbReference type="PDBsum" id="7E8T"/>
<dbReference type="PDBsum" id="7E93"/>
<dbReference type="PDBsum" id="7E94"/>
<dbReference type="PDBsum" id="7EA3"/>
<dbReference type="PDBsum" id="7KMT"/>
<dbReference type="PDBsum" id="7U05"/>
<dbReference type="PDBsum" id="7U06"/>
<dbReference type="EMDB" id="EMD-22928"/>
<dbReference type="EMDB" id="EMD-26254"/>
<dbReference type="EMDB" id="EMD-26255"/>
<dbReference type="EMDB" id="EMD-30954"/>
<dbReference type="EMDB" id="EMD-30955"/>
<dbReference type="EMDB" id="EMD-31021"/>
<dbReference type="EMDB" id="EMD-31022"/>
<dbReference type="EMDB" id="EMD-31027"/>
<dbReference type="EMDB" id="EMD-31028"/>
<dbReference type="EMDB" id="EMD-31038"/>
<dbReference type="SMR" id="P36149"/>
<dbReference type="BioGRID" id="34199">
    <property type="interactions" value="496"/>
</dbReference>
<dbReference type="ComplexPortal" id="CPX-1383">
    <property type="entry name" value="TRAPPIII protein complex"/>
</dbReference>
<dbReference type="ComplexPortal" id="CPX-1939">
    <property type="entry name" value="TRAPP II complex"/>
</dbReference>
<dbReference type="ComplexPortal" id="CPX-1940">
    <property type="entry name" value="TRAPPI protein complex"/>
</dbReference>
<dbReference type="DIP" id="DIP-1710N"/>
<dbReference type="FunCoup" id="P36149">
    <property type="interactions" value="1239"/>
</dbReference>
<dbReference type="IntAct" id="P36149">
    <property type="interactions" value="27"/>
</dbReference>
<dbReference type="MINT" id="P36149"/>
<dbReference type="STRING" id="4932.YKR068C"/>
<dbReference type="iPTMnet" id="P36149"/>
<dbReference type="SwissPalm" id="P36149"/>
<dbReference type="PaxDb" id="4932-YKR068C"/>
<dbReference type="PeptideAtlas" id="P36149"/>
<dbReference type="EnsemblFungi" id="YKR068C_mRNA">
    <property type="protein sequence ID" value="YKR068C"/>
    <property type="gene ID" value="YKR068C"/>
</dbReference>
<dbReference type="GeneID" id="853942"/>
<dbReference type="KEGG" id="sce:YKR068C"/>
<dbReference type="AGR" id="SGD:S000001776"/>
<dbReference type="SGD" id="S000001776">
    <property type="gene designation" value="BET3"/>
</dbReference>
<dbReference type="VEuPathDB" id="FungiDB:YKR068C"/>
<dbReference type="eggNOG" id="KOG3330">
    <property type="taxonomic scope" value="Eukaryota"/>
</dbReference>
<dbReference type="GeneTree" id="ENSGT00390000003880"/>
<dbReference type="HOGENOM" id="CLU_087110_0_0_1"/>
<dbReference type="InParanoid" id="P36149"/>
<dbReference type="OMA" id="MVQMQVQ"/>
<dbReference type="OrthoDB" id="10262857at2759"/>
<dbReference type="BioCyc" id="YEAST:G3O-32034-MONOMER"/>
<dbReference type="Reactome" id="R-SCE-204005">
    <property type="pathway name" value="COPII-mediated vesicle transport"/>
</dbReference>
<dbReference type="Reactome" id="R-SCE-8876198">
    <property type="pathway name" value="RAB GEFs exchange GTP for GDP on RABs"/>
</dbReference>
<dbReference type="BioGRID-ORCS" id="853942">
    <property type="hits" value="0 hits in 10 CRISPR screens"/>
</dbReference>
<dbReference type="EvolutionaryTrace" id="P36149"/>
<dbReference type="PRO" id="PR:P36149"/>
<dbReference type="Proteomes" id="UP000002311">
    <property type="component" value="Chromosome XI"/>
</dbReference>
<dbReference type="RNAct" id="P36149">
    <property type="molecule type" value="protein"/>
</dbReference>
<dbReference type="GO" id="GO:0033106">
    <property type="term" value="C:cis-Golgi network membrane"/>
    <property type="evidence" value="ECO:0000314"/>
    <property type="project" value="SGD"/>
</dbReference>
<dbReference type="GO" id="GO:0005829">
    <property type="term" value="C:cytosol"/>
    <property type="evidence" value="ECO:0007005"/>
    <property type="project" value="SGD"/>
</dbReference>
<dbReference type="GO" id="GO:0005783">
    <property type="term" value="C:endoplasmic reticulum"/>
    <property type="evidence" value="ECO:0007669"/>
    <property type="project" value="UniProtKB-SubCell"/>
</dbReference>
<dbReference type="GO" id="GO:0000407">
    <property type="term" value="C:phagophore assembly site"/>
    <property type="evidence" value="ECO:0000303"/>
    <property type="project" value="ComplexPortal"/>
</dbReference>
<dbReference type="GO" id="GO:0030008">
    <property type="term" value="C:TRAPP complex"/>
    <property type="evidence" value="ECO:0000318"/>
    <property type="project" value="GO_Central"/>
</dbReference>
<dbReference type="GO" id="GO:1990070">
    <property type="term" value="C:TRAPPI protein complex"/>
    <property type="evidence" value="ECO:0000314"/>
    <property type="project" value="SGD"/>
</dbReference>
<dbReference type="GO" id="GO:1990071">
    <property type="term" value="C:TRAPPII protein complex"/>
    <property type="evidence" value="ECO:0000314"/>
    <property type="project" value="SGD"/>
</dbReference>
<dbReference type="GO" id="GO:1990072">
    <property type="term" value="C:TRAPPIII protein complex"/>
    <property type="evidence" value="ECO:0000314"/>
    <property type="project" value="SGD"/>
</dbReference>
<dbReference type="GO" id="GO:0006995">
    <property type="term" value="P:cellular response to nitrogen starvation"/>
    <property type="evidence" value="ECO:0000315"/>
    <property type="project" value="SGD"/>
</dbReference>
<dbReference type="GO" id="GO:0032258">
    <property type="term" value="P:cytoplasm to vacuole targeting by the Cvt pathway"/>
    <property type="evidence" value="ECO:0000315"/>
    <property type="project" value="SGD"/>
</dbReference>
<dbReference type="GO" id="GO:0006888">
    <property type="term" value="P:endoplasmic reticulum to Golgi vesicle-mediated transport"/>
    <property type="evidence" value="ECO:0000314"/>
    <property type="project" value="ComplexPortal"/>
</dbReference>
<dbReference type="GO" id="GO:0006891">
    <property type="term" value="P:intra-Golgi vesicle-mediated transport"/>
    <property type="evidence" value="ECO:0000315"/>
    <property type="project" value="SGD"/>
</dbReference>
<dbReference type="GO" id="GO:0016236">
    <property type="term" value="P:macroautophagy"/>
    <property type="evidence" value="ECO:0000315"/>
    <property type="project" value="SGD"/>
</dbReference>
<dbReference type="GO" id="GO:0042147">
    <property type="term" value="P:retrograde transport, endosome to Golgi"/>
    <property type="evidence" value="ECO:0000303"/>
    <property type="project" value="ComplexPortal"/>
</dbReference>
<dbReference type="CDD" id="cd14942">
    <property type="entry name" value="TRAPPC3_bet3"/>
    <property type="match status" value="1"/>
</dbReference>
<dbReference type="FunFam" id="3.30.1380.20:FF:000001">
    <property type="entry name" value="Trafficking protein particle complex subunit BET3"/>
    <property type="match status" value="1"/>
</dbReference>
<dbReference type="Gene3D" id="3.30.1380.20">
    <property type="entry name" value="Trafficking protein particle complex subunit 3"/>
    <property type="match status" value="1"/>
</dbReference>
<dbReference type="InterPro" id="IPR016721">
    <property type="entry name" value="Bet3"/>
</dbReference>
<dbReference type="InterPro" id="IPR024096">
    <property type="entry name" value="NO_sig/Golgi_transp_ligand-bd"/>
</dbReference>
<dbReference type="InterPro" id="IPR007194">
    <property type="entry name" value="TRAPP_component"/>
</dbReference>
<dbReference type="PANTHER" id="PTHR13048">
    <property type="entry name" value="TRAFFICKING PROTEIN PARTICLE COMPLEX SUBUNIT 3"/>
    <property type="match status" value="1"/>
</dbReference>
<dbReference type="Pfam" id="PF04051">
    <property type="entry name" value="TRAPP"/>
    <property type="match status" value="1"/>
</dbReference>
<dbReference type="PIRSF" id="PIRSF018293">
    <property type="entry name" value="TRAPP_I_complex_Bet3"/>
    <property type="match status" value="1"/>
</dbReference>
<dbReference type="SUPFAM" id="SSF111126">
    <property type="entry name" value="Ligand-binding domain in the NO signalling and Golgi transport"/>
    <property type="match status" value="1"/>
</dbReference>
<accession>P36149</accession>
<accession>D6VXC9</accession>
<reference key="1">
    <citation type="journal article" date="1994" name="Nature">
        <title>Complete DNA sequence of yeast chromosome XI.</title>
        <authorList>
            <person name="Dujon B."/>
            <person name="Alexandraki D."/>
            <person name="Andre B."/>
            <person name="Ansorge W."/>
            <person name="Baladron V."/>
            <person name="Ballesta J.P.G."/>
            <person name="Banrevi A."/>
            <person name="Bolle P.-A."/>
            <person name="Bolotin-Fukuhara M."/>
            <person name="Bossier P."/>
            <person name="Bou G."/>
            <person name="Boyer J."/>
            <person name="Buitrago M.J."/>
            <person name="Cheret G."/>
            <person name="Colleaux L."/>
            <person name="Daignan-Fornier B."/>
            <person name="del Rey F."/>
            <person name="Dion C."/>
            <person name="Domdey H."/>
            <person name="Duesterhoeft A."/>
            <person name="Duesterhus S."/>
            <person name="Entian K.-D."/>
            <person name="Erfle H."/>
            <person name="Esteban P.F."/>
            <person name="Feldmann H."/>
            <person name="Fernandes L."/>
            <person name="Fobo G.M."/>
            <person name="Fritz C."/>
            <person name="Fukuhara H."/>
            <person name="Gabel C."/>
            <person name="Gaillon L."/>
            <person name="Garcia-Cantalejo J.M."/>
            <person name="Garcia-Ramirez J.J."/>
            <person name="Gent M.E."/>
            <person name="Ghazvini M."/>
            <person name="Goffeau A."/>
            <person name="Gonzalez A."/>
            <person name="Grothues D."/>
            <person name="Guerreiro P."/>
            <person name="Hegemann J.H."/>
            <person name="Hewitt N."/>
            <person name="Hilger F."/>
            <person name="Hollenberg C.P."/>
            <person name="Horaitis O."/>
            <person name="Indge K.J."/>
            <person name="Jacquier A."/>
            <person name="James C.M."/>
            <person name="Jauniaux J.-C."/>
            <person name="Jimenez A."/>
            <person name="Keuchel H."/>
            <person name="Kirchrath L."/>
            <person name="Kleine K."/>
            <person name="Koetter P."/>
            <person name="Legrain P."/>
            <person name="Liebl S."/>
            <person name="Louis E.J."/>
            <person name="Maia e Silva A."/>
            <person name="Marck C."/>
            <person name="Monnier A.-L."/>
            <person name="Moestl D."/>
            <person name="Mueller S."/>
            <person name="Obermaier B."/>
            <person name="Oliver S.G."/>
            <person name="Pallier C."/>
            <person name="Pascolo S."/>
            <person name="Pfeiffer F."/>
            <person name="Philippsen P."/>
            <person name="Planta R.J."/>
            <person name="Pohl F.M."/>
            <person name="Pohl T.M."/>
            <person name="Poehlmann R."/>
            <person name="Portetelle D."/>
            <person name="Purnelle B."/>
            <person name="Puzos V."/>
            <person name="Ramezani Rad M."/>
            <person name="Rasmussen S.W."/>
            <person name="Remacha M.A."/>
            <person name="Revuelta J.L."/>
            <person name="Richard G.-F."/>
            <person name="Rieger M."/>
            <person name="Rodrigues-Pousada C."/>
            <person name="Rose M."/>
            <person name="Rupp T."/>
            <person name="Santos M.A."/>
            <person name="Schwager C."/>
            <person name="Sensen C."/>
            <person name="Skala J."/>
            <person name="Soares H."/>
            <person name="Sor F."/>
            <person name="Stegemann J."/>
            <person name="Tettelin H."/>
            <person name="Thierry A."/>
            <person name="Tzermia M."/>
            <person name="Urrestarazu L.A."/>
            <person name="van Dyck L."/>
            <person name="van Vliet-Reedijk J.C."/>
            <person name="Valens M."/>
            <person name="Vandenbol M."/>
            <person name="Vilela C."/>
            <person name="Vissers S."/>
            <person name="von Wettstein D."/>
            <person name="Voss H."/>
            <person name="Wiemann S."/>
            <person name="Xu G."/>
            <person name="Zimmermann J."/>
            <person name="Haasemann M."/>
            <person name="Becker I."/>
            <person name="Mewes H.-W."/>
        </authorList>
    </citation>
    <scope>NUCLEOTIDE SEQUENCE [LARGE SCALE GENOMIC DNA]</scope>
    <source>
        <strain>ATCC 204508 / S288c</strain>
    </source>
</reference>
<reference key="2">
    <citation type="journal article" date="2014" name="G3 (Bethesda)">
        <title>The reference genome sequence of Saccharomyces cerevisiae: Then and now.</title>
        <authorList>
            <person name="Engel S.R."/>
            <person name="Dietrich F.S."/>
            <person name="Fisk D.G."/>
            <person name="Binkley G."/>
            <person name="Balakrishnan R."/>
            <person name="Costanzo M.C."/>
            <person name="Dwight S.S."/>
            <person name="Hitz B.C."/>
            <person name="Karra K."/>
            <person name="Nash R.S."/>
            <person name="Weng S."/>
            <person name="Wong E.D."/>
            <person name="Lloyd P."/>
            <person name="Skrzypek M.S."/>
            <person name="Miyasato S.R."/>
            <person name="Simison M."/>
            <person name="Cherry J.M."/>
        </authorList>
    </citation>
    <scope>GENOME REANNOTATION</scope>
    <source>
        <strain>ATCC 204508 / S288c</strain>
    </source>
</reference>
<reference key="3">
    <citation type="journal article" date="2007" name="Genome Res.">
        <title>Approaching a complete repository of sequence-verified protein-encoding clones for Saccharomyces cerevisiae.</title>
        <authorList>
            <person name="Hu Y."/>
            <person name="Rolfs A."/>
            <person name="Bhullar B."/>
            <person name="Murthy T.V.S."/>
            <person name="Zhu C."/>
            <person name="Berger M.F."/>
            <person name="Camargo A.A."/>
            <person name="Kelley F."/>
            <person name="McCarron S."/>
            <person name="Jepson D."/>
            <person name="Richardson A."/>
            <person name="Raphael J."/>
            <person name="Moreira D."/>
            <person name="Taycher E."/>
            <person name="Zuo D."/>
            <person name="Mohr S."/>
            <person name="Kane M.F."/>
            <person name="Williamson J."/>
            <person name="Simpson A.J.G."/>
            <person name="Bulyk M.L."/>
            <person name="Harlow E."/>
            <person name="Marsischky G."/>
            <person name="Kolodner R.D."/>
            <person name="LaBaer J."/>
        </authorList>
    </citation>
    <scope>NUCLEOTIDE SEQUENCE [GENOMIC DNA]</scope>
    <source>
        <strain>ATCC 204508 / S288c</strain>
    </source>
</reference>
<reference key="4">
    <citation type="journal article" date="1995" name="Mol. Biol. Cell">
        <title>BET3 encodes a novel hydrophilic protein that acts in conjunction with yeast SNAREs.</title>
        <authorList>
            <person name="Rossi G."/>
            <person name="Kolstad K."/>
            <person name="Stone S."/>
            <person name="Palluault F."/>
            <person name="Ferro-Novick S."/>
        </authorList>
    </citation>
    <scope>FUNCTION</scope>
</reference>
<reference key="5">
    <citation type="journal article" date="1998" name="EMBO J.">
        <title>TRAPP, a highly conserved novel complex on the cis-Golgi that mediates vesicle docking and fusion.</title>
        <authorList>
            <person name="Sacher M."/>
            <person name="Jiang Y."/>
            <person name="Barrowman J."/>
            <person name="Scarpa A."/>
            <person name="Burston J."/>
            <person name="Zhang L."/>
            <person name="Schieltz D."/>
            <person name="Yates J.R. III"/>
            <person name="Abeliovich H."/>
            <person name="Ferro-Novick S."/>
        </authorList>
    </citation>
    <scope>FUNCTION</scope>
    <scope>IDENTIFICATION IN THE TRAPP II COMPLEX</scope>
    <scope>CHARACTERIZATION</scope>
</reference>
<reference key="6">
    <citation type="journal article" date="2001" name="Mol. Cell">
        <title>TRAPP I implicated in the specificity of tethering in ER-to-Golgi transport.</title>
        <authorList>
            <person name="Sacher M."/>
            <person name="Barrowman J."/>
            <person name="Wang W."/>
            <person name="Horecka J."/>
            <person name="Zhang Y."/>
            <person name="Pypaert M."/>
            <person name="Ferro-Novick S."/>
        </authorList>
    </citation>
    <scope>FUNCTION OF THE TRAPP II COMPLEX</scope>
    <scope>IDENTIFICATION IN THE TRAPP II COMPLEX</scope>
    <scope>FUNCTION OF THE TRAPP I COMPLEX</scope>
    <scope>IDENTIFICATION IN THE TRAPP I COMPLEX</scope>
    <scope>SUBCELLULAR LOCATION</scope>
</reference>
<reference key="7">
    <citation type="journal article" date="2003" name="Nature">
        <title>Global analysis of protein expression in yeast.</title>
        <authorList>
            <person name="Ghaemmaghami S."/>
            <person name="Huh W.-K."/>
            <person name="Bower K."/>
            <person name="Howson R.W."/>
            <person name="Belle A."/>
            <person name="Dephoure N."/>
            <person name="O'Shea E.K."/>
            <person name="Weissman J.S."/>
        </authorList>
    </citation>
    <scope>LEVEL OF PROTEIN EXPRESSION [LARGE SCALE ANALYSIS]</scope>
</reference>
<reference key="8">
    <citation type="journal article" date="2005" name="EMBO J.">
        <title>Structure of palmitoylated BET3: insights into TRAPP complex assembly and membrane localization.</title>
        <authorList>
            <person name="Turnbull A.P."/>
            <person name="Kummel D."/>
            <person name="Prinz B."/>
            <person name="Holz C."/>
            <person name="Schultchen J."/>
            <person name="Lang C."/>
            <person name="Niesen F.H."/>
            <person name="Hofmann K.P."/>
            <person name="Delbruck H."/>
            <person name="Behlke J."/>
            <person name="Muller E.C."/>
            <person name="Jarosch E."/>
            <person name="Sommer T."/>
            <person name="Heinemann U."/>
        </authorList>
    </citation>
    <scope>MUTAGENESIS OF CYS-80</scope>
    <scope>PALMITOYLATION AT CYS-80</scope>
</reference>
<reference key="9">
    <citation type="journal article" date="2010" name="Nat. Struct. Mol. Biol.">
        <title>Molecular architecture of the TRAPPII complex and implications for vesicle tethering.</title>
        <authorList>
            <person name="Yip C.K."/>
            <person name="Berscheminski J."/>
            <person name="Walz T."/>
        </authorList>
    </citation>
    <scope>IDENTIFICATION IN THE TRAP II COMPLEX</scope>
    <scope>FUNCTION OF THE TRAP II COMPLEX</scope>
</reference>
<reference key="10">
    <citation type="journal article" date="2010" name="Proc. Natl. Acad. Sci. U.S.A.">
        <title>Trs85 directs a Ypt1 GEF, TRAPPIII, to the phagophore to promote autophagy.</title>
        <authorList>
            <person name="Lynch-Day M.A."/>
            <person name="Bhandari D."/>
            <person name="Menon S."/>
            <person name="Huang J."/>
            <person name="Cai H."/>
            <person name="Bartholomew C.R."/>
            <person name="Brumell J.H."/>
            <person name="Ferro-Novick S."/>
            <person name="Klionsky D.J."/>
        </authorList>
    </citation>
    <scope>IDENTIFICATION IN THE TRAPP III COMPLEX</scope>
    <scope>SUBCELLULAR LOCATION</scope>
    <scope>FUNCTION OF THE TRAPP III COMPLEX</scope>
</reference>
<reference key="11">
    <citation type="journal article" date="2012" name="Proc. Natl. Acad. Sci. U.S.A.">
        <title>N-terminal acetylome analyses and functional insights of the N-terminal acetyltransferase NatB.</title>
        <authorList>
            <person name="Van Damme P."/>
            <person name="Lasa M."/>
            <person name="Polevoda B."/>
            <person name="Gazquez C."/>
            <person name="Elosegui-Artola A."/>
            <person name="Kim D.S."/>
            <person name="De Juan-Pardo E."/>
            <person name="Demeyer K."/>
            <person name="Hole K."/>
            <person name="Larrea E."/>
            <person name="Timmerman E."/>
            <person name="Prieto J."/>
            <person name="Arnesen T."/>
            <person name="Sherman F."/>
            <person name="Gevaert K."/>
            <person name="Aldabe R."/>
        </authorList>
    </citation>
    <scope>IDENTIFICATION BY MASS SPECTROMETRY [LARGE SCALE ANALYSIS]</scope>
</reference>
<evidence type="ECO:0000269" key="1">
    <source>
    </source>
</evidence>
<evidence type="ECO:0000269" key="2">
    <source>
    </source>
</evidence>
<evidence type="ECO:0000269" key="3">
    <source>
    </source>
</evidence>
<evidence type="ECO:0000269" key="4">
    <source>
    </source>
</evidence>
<evidence type="ECO:0000269" key="5">
    <source>
    </source>
</evidence>
<evidence type="ECO:0000269" key="6">
    <source>
    </source>
</evidence>
<evidence type="ECO:0000269" key="7">
    <source>
    </source>
</evidence>
<evidence type="ECO:0000305" key="8"/>
<name>BET3_YEAST</name>
<gene>
    <name type="primary">BET3</name>
    <name type="ordered locus">YKR068C</name>
</gene>
<protein>
    <recommendedName>
        <fullName>Trafficking protein particle complex subunit BET3</fullName>
        <shortName>TRAPP subunit BET3</shortName>
    </recommendedName>
    <alternativeName>
        <fullName>Transport protein particle 22 kDa subunit</fullName>
    </alternativeName>
</protein>
<feature type="chain" id="PRO_0000211578" description="Trafficking protein particle complex subunit BET3">
    <location>
        <begin position="1"/>
        <end position="193"/>
    </location>
</feature>
<feature type="lipid moiety-binding region" description="S-palmitoyl cysteine" evidence="3">
    <location>
        <position position="80"/>
    </location>
</feature>
<feature type="mutagenesis site" description="Loss of palmitoylation." evidence="3">
    <original>C</original>
    <variation>S</variation>
    <location>
        <position position="80"/>
    </location>
</feature>
<proteinExistence type="evidence at protein level"/>
<organism>
    <name type="scientific">Saccharomyces cerevisiae (strain ATCC 204508 / S288c)</name>
    <name type="common">Baker's yeast</name>
    <dbReference type="NCBI Taxonomy" id="559292"/>
    <lineage>
        <taxon>Eukaryota</taxon>
        <taxon>Fungi</taxon>
        <taxon>Dikarya</taxon>
        <taxon>Ascomycota</taxon>
        <taxon>Saccharomycotina</taxon>
        <taxon>Saccharomycetes</taxon>
        <taxon>Saccharomycetales</taxon>
        <taxon>Saccharomycetaceae</taxon>
        <taxon>Saccharomyces</taxon>
    </lineage>
</organism>
<comment type="function">
    <text evidence="1 4 5 6 7">Component of the TRAPP I, TRAPP II and TRAPP III complexes which act as guanine nucleotide exchange factors (GEF) for YPT1. TRAPP I plays a key role in the late stages of endoplasmic reticulum to Golgi traffic. TRAPP II plays a role in intra-Golgi transport. TRAPP III plays a role in autophagosome formation. Required for sporulation. Has a role late in meiosis following DNA replication.</text>
</comment>
<comment type="subunit">
    <text evidence="1 4 5 7">Part of the multisubunit TRAPP (transport protein particle) I complex composed of BET3, BET5, TRS20, TRS23, TRS31 and TRS33. Part of the multisubunit TRAPP (transport protein particle) II complex composed of BET3, BET5, TRS20, TRS23, TRS31, TRS33, TRS65, TRS85, TRS120 and TRS130. Part of the multisubunit TRAPP (transport protein particle) III complex composed of BET3, BET5, TRS20, TRS23, TRS31, TRS33 and TRS85.</text>
</comment>
<comment type="interaction">
    <interactant intactId="EBI-3567">
        <id>P36149</id>
    </interactant>
    <interactant intactId="EBI-3580">
        <id>Q03630</id>
        <label>BET5</label>
    </interactant>
    <organismsDiffer>false</organismsDiffer>
    <experiments>12</experiments>
</comment>
<comment type="interaction">
    <interactant intactId="EBI-3567">
        <id>P36149</id>
    </interactant>
    <interactant intactId="EBI-19468">
        <id>P38334</id>
        <label>TRS20</label>
    </interactant>
    <organismsDiffer>false</organismsDiffer>
    <experiments>12</experiments>
</comment>
<comment type="interaction">
    <interactant intactId="EBI-3567">
        <id>P36149</id>
    </interactant>
    <interactant intactId="EBI-19474">
        <id>Q03784</id>
        <label>TRS23</label>
    </interactant>
    <organismsDiffer>false</organismsDiffer>
    <experiments>12</experiments>
</comment>
<comment type="interaction">
    <interactant intactId="EBI-3567">
        <id>P36149</id>
    </interactant>
    <interactant intactId="EBI-38770">
        <id>Q03337</id>
        <label>TRS31</label>
    </interactant>
    <organismsDiffer>false</organismsDiffer>
    <experiments>14</experiments>
</comment>
<comment type="interaction">
    <interactant intactId="EBI-3567">
        <id>P36149</id>
    </interactant>
    <interactant intactId="EBI-19480">
        <id>Q99394</id>
        <label>TRS33</label>
    </interactant>
    <organismsDiffer>false</organismsDiffer>
    <experiments>10</experiments>
</comment>
<comment type="subcellular location">
    <subcellularLocation>
        <location>Golgi apparatus</location>
        <location>cis-Golgi network</location>
    </subcellularLocation>
    <subcellularLocation>
        <location>Endoplasmic reticulum</location>
    </subcellularLocation>
    <subcellularLocation>
        <location>Preautophagosomal structure</location>
    </subcellularLocation>
</comment>
<comment type="miscellaneous">
    <text evidence="2">Present with 2370 molecules/cell in log phase SD medium.</text>
</comment>
<comment type="similarity">
    <text evidence="8">Belongs to the TRAPP small subunits family. BET3 subfamily.</text>
</comment>